<comment type="function">
    <text evidence="1">Has a role in spermatogenesis and oogenesis.</text>
</comment>
<comment type="subcellular location">
    <subcellularLocation>
        <location evidence="4">Cell membrane</location>
        <topology evidence="4">Single-pass type I membrane protein</topology>
    </subcellularLocation>
</comment>
<comment type="similarity">
    <text evidence="4">Belongs to the cueball family.</text>
</comment>
<feature type="signal peptide" evidence="2">
    <location>
        <begin position="1"/>
        <end position="26"/>
    </location>
</feature>
<feature type="chain" id="PRO_0000386577" description="Protein cueball" evidence="2">
    <location>
        <begin position="27"/>
        <end position="644"/>
    </location>
</feature>
<feature type="topological domain" description="Extracellular" evidence="2">
    <location>
        <begin position="27"/>
        <end position="531"/>
    </location>
</feature>
<feature type="transmembrane region" description="Helical" evidence="2">
    <location>
        <begin position="532"/>
        <end position="552"/>
    </location>
</feature>
<feature type="topological domain" description="Cytoplasmic" evidence="2">
    <location>
        <begin position="553"/>
        <end position="644"/>
    </location>
</feature>
<feature type="repeat" description="LDL-receptor class B 1" evidence="2">
    <location>
        <begin position="121"/>
        <end position="166"/>
    </location>
</feature>
<feature type="repeat" description="LDL-receptor class B 2" evidence="2">
    <location>
        <begin position="167"/>
        <end position="211"/>
    </location>
</feature>
<feature type="repeat" description="LDL-receptor class B 3" evidence="2">
    <location>
        <begin position="212"/>
        <end position="257"/>
    </location>
</feature>
<feature type="domain" description="EGF-like 1" evidence="3">
    <location>
        <begin position="398"/>
        <end position="430"/>
    </location>
</feature>
<feature type="domain" description="EGF-like 2" evidence="3">
    <location>
        <begin position="433"/>
        <end position="471"/>
    </location>
</feature>
<feature type="glycosylation site" description="N-linked (GlcNAc...) asparagine" evidence="2">
    <location>
        <position position="82"/>
    </location>
</feature>
<feature type="glycosylation site" description="N-linked (GlcNAc...) asparagine" evidence="2">
    <location>
        <position position="108"/>
    </location>
</feature>
<feature type="glycosylation site" description="N-linked (GlcNAc...) asparagine" evidence="2">
    <location>
        <position position="175"/>
    </location>
</feature>
<feature type="glycosylation site" description="N-linked (GlcNAc...) asparagine" evidence="2">
    <location>
        <position position="190"/>
    </location>
</feature>
<feature type="glycosylation site" description="N-linked (GlcNAc...) asparagine" evidence="2">
    <location>
        <position position="313"/>
    </location>
</feature>
<feature type="glycosylation site" description="N-linked (GlcNAc...) asparagine" evidence="2">
    <location>
        <position position="473"/>
    </location>
</feature>
<feature type="glycosylation site" description="N-linked (GlcNAc...) asparagine" evidence="2">
    <location>
        <position position="508"/>
    </location>
</feature>
<feature type="disulfide bond" evidence="3">
    <location>
        <begin position="402"/>
        <end position="411"/>
    </location>
</feature>
<feature type="disulfide bond" evidence="3">
    <location>
        <begin position="406"/>
        <end position="421"/>
    </location>
</feature>
<feature type="disulfide bond" evidence="3">
    <location>
        <begin position="437"/>
        <end position="447"/>
    </location>
</feature>
<feature type="disulfide bond" evidence="3">
    <location>
        <begin position="441"/>
        <end position="459"/>
    </location>
</feature>
<feature type="disulfide bond" evidence="3">
    <location>
        <begin position="461"/>
        <end position="470"/>
    </location>
</feature>
<sequence>MIRIRFGMDVLLVVLLATCLLTPAHGTPLEWDFAVTLRTKIQFMDSSWQTIATAAHEFDELSALTFDESEELIYFNDLKHRNGSIFSLKRDLIAANHVAEQTIARTGNESVGGLAYDPLNMNLFWSDTEQRKIFFAPIHGSVTPKVLVDLSAEGGRPDGVAVDVCRRKLYWTNSNVTHPTVERINLDGSNRTVIINSDIDMPRGIVVDQLSDRLFWIDDLKGVFFSVESCKLDGSDRQVVLKDKHHEPLNLAVTNDAIYWTDRTTRAVWSHPKVPVIKVTTTSKPEEEDSTDSTDFKDPEPVAEDCPLVRVANLSEEARGIVVRTGFYQRLQKDHHCASIVRKVKERVVEQNRKFEIRSMLDQKIKVLEDERCMNGGEYRAATDLCICPTGFKGSRCEIRECHNYCVHGTCQMSELAYPKCYCQPGFTGERCELSVCSGLCLNGGHCRVSKDENEAPSCECPAKFGGARCEQNSTEICSLFCRLLKHEPEMYVPFGCHSICEELAQDNSTNIAVPQYEHLEVCLTPRVWTSSVIIILVVGIVSSLLLVAVIVHGIRRLYKPKRPRIRKTFVVRKQARTNSAGDTPLTNRPLATEQCEITIENCCNMNICETPCFDPKLVEQTLSKSSCKEDKKILIHNMEDDLY</sequence>
<name>CUE_DROSI</name>
<accession>B4QMF4</accession>
<organism>
    <name type="scientific">Drosophila simulans</name>
    <name type="common">Fruit fly</name>
    <dbReference type="NCBI Taxonomy" id="7240"/>
    <lineage>
        <taxon>Eukaryota</taxon>
        <taxon>Metazoa</taxon>
        <taxon>Ecdysozoa</taxon>
        <taxon>Arthropoda</taxon>
        <taxon>Hexapoda</taxon>
        <taxon>Insecta</taxon>
        <taxon>Pterygota</taxon>
        <taxon>Neoptera</taxon>
        <taxon>Endopterygota</taxon>
        <taxon>Diptera</taxon>
        <taxon>Brachycera</taxon>
        <taxon>Muscomorpha</taxon>
        <taxon>Ephydroidea</taxon>
        <taxon>Drosophilidae</taxon>
        <taxon>Drosophila</taxon>
        <taxon>Sophophora</taxon>
    </lineage>
</organism>
<proteinExistence type="inferred from homology"/>
<evidence type="ECO:0000250" key="1">
    <source>
        <dbReference type="UniProtKB" id="Q95RU0"/>
    </source>
</evidence>
<evidence type="ECO:0000255" key="2"/>
<evidence type="ECO:0000255" key="3">
    <source>
        <dbReference type="PROSITE-ProRule" id="PRU00076"/>
    </source>
</evidence>
<evidence type="ECO:0000305" key="4"/>
<evidence type="ECO:0000312" key="5">
    <source>
        <dbReference type="EMBL" id="EDX08811.1"/>
    </source>
</evidence>
<keyword id="KW-1003">Cell membrane</keyword>
<keyword id="KW-0221">Differentiation</keyword>
<keyword id="KW-1015">Disulfide bond</keyword>
<keyword id="KW-0245">EGF-like domain</keyword>
<keyword id="KW-0325">Glycoprotein</keyword>
<keyword id="KW-0472">Membrane</keyword>
<keyword id="KW-0896">Oogenesis</keyword>
<keyword id="KW-1185">Reference proteome</keyword>
<keyword id="KW-0677">Repeat</keyword>
<keyword id="KW-0732">Signal</keyword>
<keyword id="KW-0744">Spermatogenesis</keyword>
<keyword id="KW-0812">Transmembrane</keyword>
<keyword id="KW-1133">Transmembrane helix</keyword>
<gene>
    <name evidence="1" type="primary">cue</name>
    <name type="ORF">GD13471</name>
</gene>
<protein>
    <recommendedName>
        <fullName evidence="1">Protein cueball</fullName>
    </recommendedName>
</protein>
<reference evidence="5" key="1">
    <citation type="journal article" date="2007" name="Nature">
        <title>Evolution of genes and genomes on the Drosophila phylogeny.</title>
        <authorList>
            <consortium name="Drosophila 12 genomes consortium"/>
        </authorList>
    </citation>
    <scope>NUCLEOTIDE SEQUENCE [LARGE SCALE GENOMIC DNA]</scope>
</reference>
<dbReference type="EMBL" id="CM000363">
    <property type="protein sequence ID" value="EDX08811.1"/>
    <property type="molecule type" value="Genomic_DNA"/>
</dbReference>
<dbReference type="SMR" id="B4QMF4"/>
<dbReference type="STRING" id="7240.B4QMF4"/>
<dbReference type="GlyCosmos" id="B4QMF4">
    <property type="glycosylation" value="7 sites, No reported glycans"/>
</dbReference>
<dbReference type="EnsemblMetazoa" id="FBtr0213381">
    <property type="protein sequence ID" value="FBpp0211873"/>
    <property type="gene ID" value="FBgn0185182"/>
</dbReference>
<dbReference type="EnsemblMetazoa" id="XM_002083190.4">
    <property type="protein sequence ID" value="XP_002083226.1"/>
    <property type="gene ID" value="LOC6736350"/>
</dbReference>
<dbReference type="GeneID" id="6736350"/>
<dbReference type="HOGENOM" id="CLU_026602_0_0_1"/>
<dbReference type="OMA" id="RCEQNST"/>
<dbReference type="OrthoDB" id="382013at2759"/>
<dbReference type="PhylomeDB" id="B4QMF4"/>
<dbReference type="Proteomes" id="UP000000304">
    <property type="component" value="Chromosome 3L"/>
</dbReference>
<dbReference type="Bgee" id="FBgn0185182">
    <property type="expression patterns" value="Expressed in adult organism and 3 other cell types or tissues"/>
</dbReference>
<dbReference type="GO" id="GO:0005886">
    <property type="term" value="C:plasma membrane"/>
    <property type="evidence" value="ECO:0007669"/>
    <property type="project" value="UniProtKB-SubCell"/>
</dbReference>
<dbReference type="GO" id="GO:0005509">
    <property type="term" value="F:calcium ion binding"/>
    <property type="evidence" value="ECO:0007669"/>
    <property type="project" value="InterPro"/>
</dbReference>
<dbReference type="GO" id="GO:0042813">
    <property type="term" value="F:Wnt receptor activity"/>
    <property type="evidence" value="ECO:0007669"/>
    <property type="project" value="TreeGrafter"/>
</dbReference>
<dbReference type="GO" id="GO:0017147">
    <property type="term" value="F:Wnt-protein binding"/>
    <property type="evidence" value="ECO:0007669"/>
    <property type="project" value="TreeGrafter"/>
</dbReference>
<dbReference type="GO" id="GO:0060070">
    <property type="term" value="P:canonical Wnt signaling pathway"/>
    <property type="evidence" value="ECO:0007669"/>
    <property type="project" value="TreeGrafter"/>
</dbReference>
<dbReference type="GO" id="GO:0048477">
    <property type="term" value="P:oogenesis"/>
    <property type="evidence" value="ECO:0007669"/>
    <property type="project" value="UniProtKB-KW"/>
</dbReference>
<dbReference type="GO" id="GO:0045938">
    <property type="term" value="P:positive regulation of circadian sleep/wake cycle, sleep"/>
    <property type="evidence" value="ECO:0007669"/>
    <property type="project" value="EnsemblMetazoa"/>
</dbReference>
<dbReference type="GO" id="GO:0007283">
    <property type="term" value="P:spermatogenesis"/>
    <property type="evidence" value="ECO:0007669"/>
    <property type="project" value="UniProtKB-KW"/>
</dbReference>
<dbReference type="GO" id="GO:0070328">
    <property type="term" value="P:triglyceride homeostasis"/>
    <property type="evidence" value="ECO:0007669"/>
    <property type="project" value="EnsemblMetazoa"/>
</dbReference>
<dbReference type="FunFam" id="2.10.25.10:FF:000744">
    <property type="entry name" value="Delta-like protein"/>
    <property type="match status" value="1"/>
</dbReference>
<dbReference type="FunFam" id="2.120.10.30:FF:000146">
    <property type="entry name" value="Protein cueball"/>
    <property type="match status" value="1"/>
</dbReference>
<dbReference type="Gene3D" id="2.10.25.10">
    <property type="entry name" value="Laminin"/>
    <property type="match status" value="3"/>
</dbReference>
<dbReference type="Gene3D" id="2.120.10.30">
    <property type="entry name" value="TolB, C-terminal domain"/>
    <property type="match status" value="1"/>
</dbReference>
<dbReference type="InterPro" id="IPR011042">
    <property type="entry name" value="6-blade_b-propeller_TolB-like"/>
</dbReference>
<dbReference type="InterPro" id="IPR050778">
    <property type="entry name" value="Cueball_EGF_LRP_Nidogen"/>
</dbReference>
<dbReference type="InterPro" id="IPR001881">
    <property type="entry name" value="EGF-like_Ca-bd_dom"/>
</dbReference>
<dbReference type="InterPro" id="IPR000742">
    <property type="entry name" value="EGF-like_dom"/>
</dbReference>
<dbReference type="InterPro" id="IPR000033">
    <property type="entry name" value="LDLR_classB_rpt"/>
</dbReference>
<dbReference type="PANTHER" id="PTHR46513:SF42">
    <property type="entry name" value="PROTEIN CUEBALL"/>
    <property type="match status" value="1"/>
</dbReference>
<dbReference type="PANTHER" id="PTHR46513">
    <property type="entry name" value="VITELLOGENIN RECEPTOR-LIKE PROTEIN-RELATED-RELATED"/>
    <property type="match status" value="1"/>
</dbReference>
<dbReference type="Pfam" id="PF00058">
    <property type="entry name" value="Ldl_recept_b"/>
    <property type="match status" value="2"/>
</dbReference>
<dbReference type="SMART" id="SM00181">
    <property type="entry name" value="EGF"/>
    <property type="match status" value="3"/>
</dbReference>
<dbReference type="SMART" id="SM00179">
    <property type="entry name" value="EGF_CA"/>
    <property type="match status" value="1"/>
</dbReference>
<dbReference type="SMART" id="SM00135">
    <property type="entry name" value="LY"/>
    <property type="match status" value="4"/>
</dbReference>
<dbReference type="SUPFAM" id="SSF57196">
    <property type="entry name" value="EGF/Laminin"/>
    <property type="match status" value="2"/>
</dbReference>
<dbReference type="SUPFAM" id="SSF63825">
    <property type="entry name" value="YWTD domain"/>
    <property type="match status" value="1"/>
</dbReference>
<dbReference type="PROSITE" id="PS00022">
    <property type="entry name" value="EGF_1"/>
    <property type="match status" value="3"/>
</dbReference>
<dbReference type="PROSITE" id="PS01186">
    <property type="entry name" value="EGF_2"/>
    <property type="match status" value="2"/>
</dbReference>
<dbReference type="PROSITE" id="PS50026">
    <property type="entry name" value="EGF_3"/>
    <property type="match status" value="2"/>
</dbReference>
<dbReference type="PROSITE" id="PS51120">
    <property type="entry name" value="LDLRB"/>
    <property type="match status" value="3"/>
</dbReference>